<accession>E3SXU4</accession>
<gene>
    <name type="primary">BHLH</name>
</gene>
<feature type="chain" id="PRO_0000425240" description="Basic helix-loop-helix protein A">
    <location>
        <begin position="1"/>
        <end position="652"/>
    </location>
</feature>
<feature type="domain" description="bHLH" evidence="1">
    <location>
        <begin position="464"/>
        <end position="513"/>
    </location>
</feature>
<feature type="region of interest" description="Disordered" evidence="2">
    <location>
        <begin position="233"/>
        <end position="271"/>
    </location>
</feature>
<feature type="region of interest" description="Disordered" evidence="2">
    <location>
        <begin position="431"/>
        <end position="463"/>
    </location>
</feature>
<feature type="compositionally biased region" description="Acidic residues" evidence="2">
    <location>
        <begin position="241"/>
        <end position="264"/>
    </location>
</feature>
<feature type="compositionally biased region" description="Polar residues" evidence="2">
    <location>
        <begin position="437"/>
        <end position="451"/>
    </location>
</feature>
<proteinExistence type="inferred from homology"/>
<organism>
    <name type="scientific">Pisum sativum</name>
    <name type="common">Garden pea</name>
    <name type="synonym">Lathyrus oleraceus</name>
    <dbReference type="NCBI Taxonomy" id="3888"/>
    <lineage>
        <taxon>Eukaryota</taxon>
        <taxon>Viridiplantae</taxon>
        <taxon>Streptophyta</taxon>
        <taxon>Embryophyta</taxon>
        <taxon>Tracheophyta</taxon>
        <taxon>Spermatophyta</taxon>
        <taxon>Magnoliopsida</taxon>
        <taxon>eudicotyledons</taxon>
        <taxon>Gunneridae</taxon>
        <taxon>Pentapetalae</taxon>
        <taxon>rosids</taxon>
        <taxon>fabids</taxon>
        <taxon>Fabales</taxon>
        <taxon>Fabaceae</taxon>
        <taxon>Papilionoideae</taxon>
        <taxon>50 kb inversion clade</taxon>
        <taxon>NPAAA clade</taxon>
        <taxon>Hologalegina</taxon>
        <taxon>IRL clade</taxon>
        <taxon>Fabeae</taxon>
        <taxon>Pisum</taxon>
    </lineage>
</organism>
<name>BHLHW_PEA</name>
<comment type="function">
    <text evidence="3">Transcription activator involved in the control of flavonoid pigmentation.</text>
</comment>
<comment type="subcellular location">
    <subcellularLocation>
        <location evidence="4">Nucleus</location>
    </subcellularLocation>
</comment>
<comment type="miscellaneous">
    <text evidence="5">Corresponds to one of the seven genes studied by Gregor Mendel in 1866. The white flowered cv. Cameor (a allele) has a truncated non-functional BHLH protein (AC E3SXU5) due to a point mutation resulting in a mis-spliced transcript (PubMed:20949001).</text>
</comment>
<comment type="similarity">
    <text>Belongs to the bHLH protein family.</text>
</comment>
<comment type="online information" name="Protein Spotlight">
    <link uri="https://www.proteinspotlight.org/back_issues/159/"/>
    <text>On the garden pea - Issue 159 of April 2014</text>
</comment>
<reference key="1">
    <citation type="journal article" date="2010" name="PLoS ONE">
        <title>Identification of Mendel's white flower character.</title>
        <authorList>
            <person name="Hellens R.P."/>
            <person name="Moreau C."/>
            <person name="Lin-Wang K."/>
            <person name="Schwinn K.E."/>
            <person name="Thomson S.J."/>
            <person name="Fiers M.W."/>
            <person name="Frew T.J."/>
            <person name="Murray S.R."/>
            <person name="Hofer J.M."/>
            <person name="Jacobs J.M."/>
            <person name="Davies K.M."/>
            <person name="Allan A.C."/>
            <person name="Bendahmane A."/>
            <person name="Coyne C.J."/>
            <person name="Timmerman-Vaughan G.M."/>
            <person name="Ellis T.H."/>
        </authorList>
    </citation>
    <scope>NUCLEOTIDE SEQUENCE [GENOMIC DNA]</scope>
    <scope>FUNCTION</scope>
</reference>
<dbReference type="EMBL" id="GU132941">
    <property type="protein sequence ID" value="ADO13282.1"/>
    <property type="molecule type" value="Genomic_DNA"/>
</dbReference>
<dbReference type="SMR" id="E3SXU4"/>
<dbReference type="GO" id="GO:0005634">
    <property type="term" value="C:nucleus"/>
    <property type="evidence" value="ECO:0007669"/>
    <property type="project" value="UniProtKB-SubCell"/>
</dbReference>
<dbReference type="GO" id="GO:0046983">
    <property type="term" value="F:protein dimerization activity"/>
    <property type="evidence" value="ECO:0007669"/>
    <property type="project" value="InterPro"/>
</dbReference>
<dbReference type="GO" id="GO:0009813">
    <property type="term" value="P:flavonoid biosynthetic process"/>
    <property type="evidence" value="ECO:0007669"/>
    <property type="project" value="UniProtKB-KW"/>
</dbReference>
<dbReference type="GO" id="GO:0009889">
    <property type="term" value="P:regulation of biosynthetic process"/>
    <property type="evidence" value="ECO:0007669"/>
    <property type="project" value="UniProtKB-ARBA"/>
</dbReference>
<dbReference type="GO" id="GO:0080090">
    <property type="term" value="P:regulation of primary metabolic process"/>
    <property type="evidence" value="ECO:0007669"/>
    <property type="project" value="UniProtKB-ARBA"/>
</dbReference>
<dbReference type="Gene3D" id="4.10.280.10">
    <property type="entry name" value="Helix-loop-helix DNA-binding domain"/>
    <property type="match status" value="1"/>
</dbReference>
<dbReference type="InterPro" id="IPR054502">
    <property type="entry name" value="bHLH-TF_ACT-like_plant"/>
</dbReference>
<dbReference type="InterPro" id="IPR011598">
    <property type="entry name" value="bHLH_dom"/>
</dbReference>
<dbReference type="InterPro" id="IPR036638">
    <property type="entry name" value="HLH_DNA-bd_sf"/>
</dbReference>
<dbReference type="InterPro" id="IPR025610">
    <property type="entry name" value="MYC/MYB_N"/>
</dbReference>
<dbReference type="PANTHER" id="PTHR46266">
    <property type="entry name" value="TRANSCRIPTION FACTOR TT8"/>
    <property type="match status" value="1"/>
</dbReference>
<dbReference type="PANTHER" id="PTHR46266:SF4">
    <property type="entry name" value="TRANSCRIPTION FACTOR TT8"/>
    <property type="match status" value="1"/>
</dbReference>
<dbReference type="Pfam" id="PF14215">
    <property type="entry name" value="bHLH-MYC_N"/>
    <property type="match status" value="1"/>
</dbReference>
<dbReference type="Pfam" id="PF22754">
    <property type="entry name" value="bHLH-TF_ACT-like_plant"/>
    <property type="match status" value="1"/>
</dbReference>
<dbReference type="Pfam" id="PF00010">
    <property type="entry name" value="HLH"/>
    <property type="match status" value="1"/>
</dbReference>
<dbReference type="SMART" id="SM00353">
    <property type="entry name" value="HLH"/>
    <property type="match status" value="1"/>
</dbReference>
<dbReference type="SUPFAM" id="SSF47459">
    <property type="entry name" value="HLH, helix-loop-helix DNA-binding domain"/>
    <property type="match status" value="1"/>
</dbReference>
<dbReference type="PROSITE" id="PS50888">
    <property type="entry name" value="BHLH"/>
    <property type="match status" value="1"/>
</dbReference>
<keyword id="KW-0010">Activator</keyword>
<keyword id="KW-0284">Flavonoid biosynthesis</keyword>
<keyword id="KW-0539">Nucleus</keyword>
<keyword id="KW-0804">Transcription</keyword>
<keyword id="KW-0805">Transcription regulation</keyword>
<sequence length="652" mass="72966">MTAPTPENGCNKLQNMLQAAVQSVQWTYSLFWQICPQQLILVWGDGYYNGAIKTRKTVQPMEVSAEEASLQRSQQLRELYESLSAGETNPPTRRPCASLSPEDLTESEWFYLMCVSFSFPPGVGLPGKAYARRQHVWLTGANEVDSKTFSRAILAKSANIQTVVCIPVLDGVVEIGTTDKIQEDLNFIKHVRSFFIDHHSLPPKPALSEHSTSNPTYSTDHIPAIMYTVADPASTAIPNQDDMDEDEEEDDEDDEVESGSEDETNQGHNQHATSIIEAAEPSELMQIEMPDDIRIGSPNDGSNNLDSDFHLLAVSNQGNPSRQIDSYTTERWGPIEEPLDDSLQIQLSSSVLHHPLEDLTQEDTHYSQTVTTILQNQWIDSPSINYINYSTQSSFTTWTNHHFHPPPPPDPATSQWLVKYILFTVPYLHTKNHDETSPQTRDTAGVNSNDPSARLRGKGTPQDELSANHVLAERRRREKLNERFIILRSLVPFVTKMDKASILGDTIEYLKQLRRKIQDLETRNRQMESEKSGVTVLVGPTEKKKVRIVEGNGTGGGVRAKAVEVVASVQVSIIESDALLEIECLQREGLLLDVMMMLRELRIEVIGVQSSLNNGVFVAELRAKVKENGNGKKVSIVEVKRALNQIIPHNNI</sequence>
<protein>
    <recommendedName>
        <fullName>Basic helix-loop-helix protein A</fullName>
    </recommendedName>
</protein>
<evidence type="ECO:0000255" key="1">
    <source>
        <dbReference type="PROSITE-ProRule" id="PRU00981"/>
    </source>
</evidence>
<evidence type="ECO:0000256" key="2">
    <source>
        <dbReference type="SAM" id="MobiDB-lite"/>
    </source>
</evidence>
<evidence type="ECO:0000269" key="3">
    <source>
    </source>
</evidence>
<evidence type="ECO:0000305" key="4"/>
<evidence type="ECO:0000305" key="5">
    <source>
    </source>
</evidence>